<sequence>MSQGRGKYDFYIGLGLAMSSSIFIGGSFILKKKGLLRLARKGSMRAGQGGHAYLKEWLWWAGLLSMGAGEVANFAAYAFAPATLVTPLGALSVLVSAILSSYFLNERLNLHGKIGCLLSILGSTVMVIHAPKEEEIETLNEMSHKLGDPGFVVFATLVVIVALILIFVVGPRHGQTNILVYITICSVIGAFSVSCVKGLGIAIKELFAGKPVLRHPLAWILLLSLIVCVSTQINYLNRALDIFNTSIVTPIYYVFFTTSVLTCSAILFKEWQDMPVDDVIGTLSGFFTIIVGIFLLHAFKDVSFSLASLPVSFRKDEKAMNGNLSNMYEVLNNNEESLTCGIEQHTGENVSRRNGNLTAF</sequence>
<organism>
    <name type="scientific">Homo sapiens</name>
    <name type="common">Human</name>
    <dbReference type="NCBI Taxonomy" id="9606"/>
    <lineage>
        <taxon>Eukaryota</taxon>
        <taxon>Metazoa</taxon>
        <taxon>Chordata</taxon>
        <taxon>Craniata</taxon>
        <taxon>Vertebrata</taxon>
        <taxon>Euteleostomi</taxon>
        <taxon>Mammalia</taxon>
        <taxon>Eutheria</taxon>
        <taxon>Euarchontoglires</taxon>
        <taxon>Primates</taxon>
        <taxon>Haplorrhini</taxon>
        <taxon>Catarrhini</taxon>
        <taxon>Hominidae</taxon>
        <taxon>Homo</taxon>
    </lineage>
</organism>
<reference key="1">
    <citation type="journal article" date="2003" name="Am. J. Hum. Genet.">
        <title>Identification of four highly conserved genes between breakpoint hotspots BP1 and BP2 of the Prader-Willi/Angelman syndromes deletion region that have undergone evolutionary transposition mediated by flanking duplicons.</title>
        <authorList>
            <person name="Chai J.-H."/>
            <person name="Locke D.P."/>
            <person name="Greally J.M."/>
            <person name="Knoll J.H.M."/>
            <person name="Ohta T."/>
            <person name="Dunai J."/>
            <person name="Yavor A."/>
            <person name="Eichler E.E."/>
            <person name="Nicholls R.D."/>
        </authorList>
    </citation>
    <scope>NUCLEOTIDE SEQUENCE [MRNA] (ISOFORM 1)</scope>
    <scope>TISSUE SPECIFICITY</scope>
</reference>
<reference key="2">
    <citation type="submission" date="2004-08" db="EMBL/GenBank/DDBJ databases">
        <title>Non-imprinted transcript from the Prader-Willi syndrome region.</title>
        <authorList>
            <person name="Jiang Y.-H."/>
            <person name="Beaudet A.L."/>
        </authorList>
    </citation>
    <scope>NUCLEOTIDE SEQUENCE [MRNA] (ISOFORM 1)</scope>
</reference>
<reference key="3">
    <citation type="journal article" date="2004" name="Nat. Genet.">
        <title>Complete sequencing and characterization of 21,243 full-length human cDNAs.</title>
        <authorList>
            <person name="Ota T."/>
            <person name="Suzuki Y."/>
            <person name="Nishikawa T."/>
            <person name="Otsuki T."/>
            <person name="Sugiyama T."/>
            <person name="Irie R."/>
            <person name="Wakamatsu A."/>
            <person name="Hayashi K."/>
            <person name="Sato H."/>
            <person name="Nagai K."/>
            <person name="Kimura K."/>
            <person name="Makita H."/>
            <person name="Sekine M."/>
            <person name="Obayashi M."/>
            <person name="Nishi T."/>
            <person name="Shibahara T."/>
            <person name="Tanaka T."/>
            <person name="Ishii S."/>
            <person name="Yamamoto J."/>
            <person name="Saito K."/>
            <person name="Kawai Y."/>
            <person name="Isono Y."/>
            <person name="Nakamura Y."/>
            <person name="Nagahari K."/>
            <person name="Murakami K."/>
            <person name="Yasuda T."/>
            <person name="Iwayanagi T."/>
            <person name="Wagatsuma M."/>
            <person name="Shiratori A."/>
            <person name="Sudo H."/>
            <person name="Hosoiri T."/>
            <person name="Kaku Y."/>
            <person name="Kodaira H."/>
            <person name="Kondo H."/>
            <person name="Sugawara M."/>
            <person name="Takahashi M."/>
            <person name="Kanda K."/>
            <person name="Yokoi T."/>
            <person name="Furuya T."/>
            <person name="Kikkawa E."/>
            <person name="Omura Y."/>
            <person name="Abe K."/>
            <person name="Kamihara K."/>
            <person name="Katsuta N."/>
            <person name="Sato K."/>
            <person name="Tanikawa M."/>
            <person name="Yamazaki M."/>
            <person name="Ninomiya K."/>
            <person name="Ishibashi T."/>
            <person name="Yamashita H."/>
            <person name="Murakawa K."/>
            <person name="Fujimori K."/>
            <person name="Tanai H."/>
            <person name="Kimata M."/>
            <person name="Watanabe M."/>
            <person name="Hiraoka S."/>
            <person name="Chiba Y."/>
            <person name="Ishida S."/>
            <person name="Ono Y."/>
            <person name="Takiguchi S."/>
            <person name="Watanabe S."/>
            <person name="Yosida M."/>
            <person name="Hotuta T."/>
            <person name="Kusano J."/>
            <person name="Kanehori K."/>
            <person name="Takahashi-Fujii A."/>
            <person name="Hara H."/>
            <person name="Tanase T.-O."/>
            <person name="Nomura Y."/>
            <person name="Togiya S."/>
            <person name="Komai F."/>
            <person name="Hara R."/>
            <person name="Takeuchi K."/>
            <person name="Arita M."/>
            <person name="Imose N."/>
            <person name="Musashino K."/>
            <person name="Yuuki H."/>
            <person name="Oshima A."/>
            <person name="Sasaki N."/>
            <person name="Aotsuka S."/>
            <person name="Yoshikawa Y."/>
            <person name="Matsunawa H."/>
            <person name="Ichihara T."/>
            <person name="Shiohata N."/>
            <person name="Sano S."/>
            <person name="Moriya S."/>
            <person name="Momiyama H."/>
            <person name="Satoh N."/>
            <person name="Takami S."/>
            <person name="Terashima Y."/>
            <person name="Suzuki O."/>
            <person name="Nakagawa S."/>
            <person name="Senoh A."/>
            <person name="Mizoguchi H."/>
            <person name="Goto Y."/>
            <person name="Shimizu F."/>
            <person name="Wakebe H."/>
            <person name="Hishigaki H."/>
            <person name="Watanabe T."/>
            <person name="Sugiyama A."/>
            <person name="Takemoto M."/>
            <person name="Kawakami B."/>
            <person name="Yamazaki M."/>
            <person name="Watanabe K."/>
            <person name="Kumagai A."/>
            <person name="Itakura S."/>
            <person name="Fukuzumi Y."/>
            <person name="Fujimori Y."/>
            <person name="Komiyama M."/>
            <person name="Tashiro H."/>
            <person name="Tanigami A."/>
            <person name="Fujiwara T."/>
            <person name="Ono T."/>
            <person name="Yamada K."/>
            <person name="Fujii Y."/>
            <person name="Ozaki K."/>
            <person name="Hirao M."/>
            <person name="Ohmori Y."/>
            <person name="Kawabata A."/>
            <person name="Hikiji T."/>
            <person name="Kobatake N."/>
            <person name="Inagaki H."/>
            <person name="Ikema Y."/>
            <person name="Okamoto S."/>
            <person name="Okitani R."/>
            <person name="Kawakami T."/>
            <person name="Noguchi S."/>
            <person name="Itoh T."/>
            <person name="Shigeta K."/>
            <person name="Senba T."/>
            <person name="Matsumura K."/>
            <person name="Nakajima Y."/>
            <person name="Mizuno T."/>
            <person name="Morinaga M."/>
            <person name="Sasaki M."/>
            <person name="Togashi T."/>
            <person name="Oyama M."/>
            <person name="Hata H."/>
            <person name="Watanabe M."/>
            <person name="Komatsu T."/>
            <person name="Mizushima-Sugano J."/>
            <person name="Satoh T."/>
            <person name="Shirai Y."/>
            <person name="Takahashi Y."/>
            <person name="Nakagawa K."/>
            <person name="Okumura K."/>
            <person name="Nagase T."/>
            <person name="Nomura N."/>
            <person name="Kikuchi H."/>
            <person name="Masuho Y."/>
            <person name="Yamashita R."/>
            <person name="Nakai K."/>
            <person name="Yada T."/>
            <person name="Nakamura Y."/>
            <person name="Ohara O."/>
            <person name="Isogai T."/>
            <person name="Sugano S."/>
        </authorList>
    </citation>
    <scope>NUCLEOTIDE SEQUENCE [LARGE SCALE MRNA] (ISOFORMS 1 AND 2)</scope>
    <source>
        <tissue>Small intestine</tissue>
    </source>
</reference>
<reference key="4">
    <citation type="submission" date="2004-07" db="EMBL/GenBank/DDBJ databases">
        <title>Full-length cDNA libraries and normalization.</title>
        <authorList>
            <person name="Li W.B."/>
            <person name="Gruber C."/>
            <person name="Jessee J."/>
            <person name="Polayes D."/>
        </authorList>
    </citation>
    <scope>NUCLEOTIDE SEQUENCE [LARGE SCALE MRNA] (ISOFORM 1)</scope>
    <source>
        <tissue>B-cell</tissue>
    </source>
</reference>
<reference key="5">
    <citation type="journal article" date="2006" name="Nature">
        <title>Analysis of the DNA sequence and duplication history of human chromosome 15.</title>
        <authorList>
            <person name="Zody M.C."/>
            <person name="Garber M."/>
            <person name="Sharpe T."/>
            <person name="Young S.K."/>
            <person name="Rowen L."/>
            <person name="O'Neill K."/>
            <person name="Whittaker C.A."/>
            <person name="Kamal M."/>
            <person name="Chang J.L."/>
            <person name="Cuomo C.A."/>
            <person name="Dewar K."/>
            <person name="FitzGerald M.G."/>
            <person name="Kodira C.D."/>
            <person name="Madan A."/>
            <person name="Qin S."/>
            <person name="Yang X."/>
            <person name="Abbasi N."/>
            <person name="Abouelleil A."/>
            <person name="Arachchi H.M."/>
            <person name="Baradarani L."/>
            <person name="Birditt B."/>
            <person name="Bloom S."/>
            <person name="Bloom T."/>
            <person name="Borowsky M.L."/>
            <person name="Burke J."/>
            <person name="Butler J."/>
            <person name="Cook A."/>
            <person name="DeArellano K."/>
            <person name="DeCaprio D."/>
            <person name="Dorris L. III"/>
            <person name="Dors M."/>
            <person name="Eichler E.E."/>
            <person name="Engels R."/>
            <person name="Fahey J."/>
            <person name="Fleetwood P."/>
            <person name="Friedman C."/>
            <person name="Gearin G."/>
            <person name="Hall J.L."/>
            <person name="Hensley G."/>
            <person name="Johnson E."/>
            <person name="Jones C."/>
            <person name="Kamat A."/>
            <person name="Kaur A."/>
            <person name="Locke D.P."/>
            <person name="Madan A."/>
            <person name="Munson G."/>
            <person name="Jaffe D.B."/>
            <person name="Lui A."/>
            <person name="Macdonald P."/>
            <person name="Mauceli E."/>
            <person name="Naylor J.W."/>
            <person name="Nesbitt R."/>
            <person name="Nicol R."/>
            <person name="O'Leary S.B."/>
            <person name="Ratcliffe A."/>
            <person name="Rounsley S."/>
            <person name="She X."/>
            <person name="Sneddon K.M.B."/>
            <person name="Stewart S."/>
            <person name="Sougnez C."/>
            <person name="Stone S.M."/>
            <person name="Topham K."/>
            <person name="Vincent D."/>
            <person name="Wang S."/>
            <person name="Zimmer A.R."/>
            <person name="Birren B.W."/>
            <person name="Hood L."/>
            <person name="Lander E.S."/>
            <person name="Nusbaum C."/>
        </authorList>
    </citation>
    <scope>NUCLEOTIDE SEQUENCE [LARGE SCALE GENOMIC DNA]</scope>
</reference>
<reference key="6">
    <citation type="journal article" date="2004" name="Genome Res.">
        <title>The status, quality, and expansion of the NIH full-length cDNA project: the Mammalian Gene Collection (MGC).</title>
        <authorList>
            <consortium name="The MGC Project Team"/>
        </authorList>
    </citation>
    <scope>NUCLEOTIDE SEQUENCE [LARGE SCALE MRNA] (ISOFORM 1)</scope>
    <source>
        <tissue>Pancreas</tissue>
        <tissue>Placenta</tissue>
    </source>
</reference>
<reference key="7">
    <citation type="journal article" date="2014" name="PLoS ONE">
        <title>Functional study of NIPA2 mutations identified from the patients with childhood absence epilepsy.</title>
        <authorList>
            <person name="Xie H."/>
            <person name="Zhang Y."/>
            <person name="Zhang P."/>
            <person name="Wang J."/>
            <person name="Wu Y."/>
            <person name="Wu X."/>
            <person name="Netoff T."/>
            <person name="Jiang Y."/>
        </authorList>
    </citation>
    <scope>VARIANTS PHE-178; SER-244 AND GLU-334 INS</scope>
    <scope>CHARACTERIZATION OF VARIANTS PHE-178; SER-244 AND GLU-334 INS</scope>
    <scope>FUNCTION</scope>
    <scope>CATALYTIC ACTIVITY</scope>
    <scope>SUBCELLULAR LOCATION</scope>
</reference>
<evidence type="ECO:0000250" key="1">
    <source>
        <dbReference type="UniProtKB" id="Q9JJC8"/>
    </source>
</evidence>
<evidence type="ECO:0000255" key="2"/>
<evidence type="ECO:0000269" key="3">
    <source>
    </source>
</evidence>
<evidence type="ECO:0000269" key="4">
    <source>
    </source>
</evidence>
<evidence type="ECO:0000303" key="5">
    <source>
    </source>
</evidence>
<evidence type="ECO:0000305" key="6"/>
<name>NIPA2_HUMAN</name>
<accession>Q8N8Q9</accession>
<accession>F8W7Y8</accession>
<accession>Q96F03</accession>
<accession>Q9BVS2</accession>
<comment type="function">
    <text evidence="4">Acts as a selective Mg(2+) transporter.</text>
</comment>
<comment type="catalytic activity">
    <reaction evidence="4">
        <text>Mg(2+)(in) = Mg(2+)(out)</text>
        <dbReference type="Rhea" id="RHEA:29827"/>
        <dbReference type="ChEBI" id="CHEBI:18420"/>
    </reaction>
</comment>
<comment type="subcellular location">
    <subcellularLocation>
        <location evidence="4">Cell membrane</location>
        <topology evidence="2">Multi-pass membrane protein</topology>
    </subcellularLocation>
    <subcellularLocation>
        <location evidence="1">Early endosome</location>
    </subcellularLocation>
    <text evidence="1">Recruited to the cell membrane in response to low extracellular magnesium.</text>
</comment>
<comment type="alternative products">
    <event type="alternative splicing"/>
    <isoform>
        <id>Q8N8Q9-1</id>
        <name>1</name>
        <sequence type="displayed"/>
    </isoform>
    <isoform>
        <id>Q8N8Q9-2</id>
        <name>2</name>
        <sequence type="described" ref="VSP_044587"/>
    </isoform>
</comment>
<comment type="tissue specificity">
    <text evidence="3">Widely expressed.</text>
</comment>
<comment type="similarity">
    <text evidence="6">Belongs to the NIPA family.</text>
</comment>
<keyword id="KW-0025">Alternative splicing</keyword>
<keyword id="KW-1003">Cell membrane</keyword>
<keyword id="KW-0967">Endosome</keyword>
<keyword id="KW-0406">Ion transport</keyword>
<keyword id="KW-0460">Magnesium</keyword>
<keyword id="KW-0472">Membrane</keyword>
<keyword id="KW-1267">Proteomics identification</keyword>
<keyword id="KW-1185">Reference proteome</keyword>
<keyword id="KW-0812">Transmembrane</keyword>
<keyword id="KW-1133">Transmembrane helix</keyword>
<keyword id="KW-0813">Transport</keyword>
<feature type="chain" id="PRO_0000191743" description="Magnesium transporter NIPA2">
    <location>
        <begin position="1"/>
        <end position="360"/>
    </location>
</feature>
<feature type="topological domain" description="Extracellular" evidence="2">
    <location>
        <begin position="1"/>
        <end position="9"/>
    </location>
</feature>
<feature type="transmembrane region" description="Helical" evidence="2">
    <location>
        <begin position="10"/>
        <end position="30"/>
    </location>
</feature>
<feature type="topological domain" description="Cytoplasmic" evidence="2">
    <location>
        <begin position="31"/>
        <end position="56"/>
    </location>
</feature>
<feature type="transmembrane region" description="Helical" evidence="2">
    <location>
        <begin position="57"/>
        <end position="77"/>
    </location>
</feature>
<feature type="topological domain" description="Extracellular" evidence="2">
    <location>
        <position position="78"/>
    </location>
</feature>
<feature type="transmembrane region" description="Helical" evidence="2">
    <location>
        <begin position="79"/>
        <end position="99"/>
    </location>
</feature>
<feature type="topological domain" description="Cytoplasmic" evidence="2">
    <location>
        <begin position="100"/>
        <end position="107"/>
    </location>
</feature>
<feature type="transmembrane region" description="Helical" evidence="2">
    <location>
        <begin position="108"/>
        <end position="128"/>
    </location>
</feature>
<feature type="topological domain" description="Extracellular" evidence="2">
    <location>
        <begin position="129"/>
        <end position="149"/>
    </location>
</feature>
<feature type="transmembrane region" description="Helical" evidence="2">
    <location>
        <begin position="150"/>
        <end position="170"/>
    </location>
</feature>
<feature type="topological domain" description="Cytoplasmic" evidence="2">
    <location>
        <begin position="171"/>
        <end position="175"/>
    </location>
</feature>
<feature type="transmembrane region" description="Helical" evidence="2">
    <location>
        <begin position="176"/>
        <end position="196"/>
    </location>
</feature>
<feature type="topological domain" description="Extracellular" evidence="2">
    <location>
        <begin position="197"/>
        <end position="215"/>
    </location>
</feature>
<feature type="transmembrane region" description="Helical" evidence="2">
    <location>
        <begin position="216"/>
        <end position="236"/>
    </location>
</feature>
<feature type="topological domain" description="Cytoplasmic" evidence="2">
    <location>
        <begin position="237"/>
        <end position="246"/>
    </location>
</feature>
<feature type="transmembrane region" description="Helical" evidence="2">
    <location>
        <begin position="247"/>
        <end position="267"/>
    </location>
</feature>
<feature type="topological domain" description="Extracellular" evidence="2">
    <location>
        <begin position="268"/>
        <end position="278"/>
    </location>
</feature>
<feature type="transmembrane region" description="Helical" evidence="2">
    <location>
        <begin position="279"/>
        <end position="299"/>
    </location>
</feature>
<feature type="topological domain" description="Cytoplasmic" evidence="2">
    <location>
        <begin position="300"/>
        <end position="360"/>
    </location>
</feature>
<feature type="splice variant" id="VSP_044587" description="In isoform 2." evidence="5">
    <original>GQGGHAYLKEWLWWAGLLSM</original>
    <variation>V</variation>
    <location>
        <begin position="47"/>
        <end position="66"/>
    </location>
</feature>
<feature type="sequence variant" id="VAR_088398" description="Found in a patient with childhood absence epilepsy; uncertain significance; loss of cell membrane localization; no significant effect on magnesium transport." evidence="4">
    <original>I</original>
    <variation>F</variation>
    <location>
        <position position="178"/>
    </location>
</feature>
<feature type="sequence variant" id="VAR_088399" description="Found in a patient with childhood absence epilepsy; uncertain significance; loss of cell membrane localization; significant decrease in magnesium transport." evidence="4">
    <original>N</original>
    <variation>S</variation>
    <location>
        <position position="244"/>
    </location>
</feature>
<feature type="sequence variant" id="VAR_088400" description="Found in a patient with childhood absence epilepsy; uncertain significance; loss of cell membrane localization; significant decrease in magnesium transport." evidence="4">
    <original>N</original>
    <variation>NE</variation>
    <location>
        <position position="334"/>
    </location>
</feature>
<feature type="sequence conflict" description="In Ref. 2; AAU34000 and 6; AAH11775." evidence="6" ref="2 6">
    <original>S</original>
    <variation>G</variation>
    <location>
        <position position="303"/>
    </location>
</feature>
<dbReference type="EMBL" id="BK001120">
    <property type="protein sequence ID" value="DAA01509.1"/>
    <property type="molecule type" value="mRNA"/>
</dbReference>
<dbReference type="EMBL" id="AY732242">
    <property type="protein sequence ID" value="AAU34000.1"/>
    <property type="molecule type" value="mRNA"/>
</dbReference>
<dbReference type="EMBL" id="AK096305">
    <property type="protein sequence ID" value="BAC04757.1"/>
    <property type="molecule type" value="mRNA"/>
</dbReference>
<dbReference type="EMBL" id="AK300843">
    <property type="protein sequence ID" value="BAG62494.1"/>
    <property type="molecule type" value="mRNA"/>
</dbReference>
<dbReference type="EMBL" id="CR606982">
    <property type="status" value="NOT_ANNOTATED_CDS"/>
    <property type="molecule type" value="mRNA"/>
</dbReference>
<dbReference type="EMBL" id="AC011767">
    <property type="status" value="NOT_ANNOTATED_CDS"/>
    <property type="molecule type" value="Genomic_DNA"/>
</dbReference>
<dbReference type="EMBL" id="BC000957">
    <property type="protein sequence ID" value="AAH00957.3"/>
    <property type="molecule type" value="mRNA"/>
</dbReference>
<dbReference type="EMBL" id="BC011775">
    <property type="protein sequence ID" value="AAH11775.1"/>
    <property type="molecule type" value="mRNA"/>
</dbReference>
<dbReference type="CCDS" id="CCDS73693.1">
    <molecule id="Q8N8Q9-1"/>
</dbReference>
<dbReference type="CCDS" id="CCDS73694.1">
    <molecule id="Q8N8Q9-2"/>
</dbReference>
<dbReference type="RefSeq" id="NP_001008860.1">
    <molecule id="Q8N8Q9-1"/>
    <property type="nucleotide sequence ID" value="NM_001008860.3"/>
</dbReference>
<dbReference type="RefSeq" id="NP_001008892.1">
    <molecule id="Q8N8Q9-1"/>
    <property type="nucleotide sequence ID" value="NM_001008892.3"/>
</dbReference>
<dbReference type="RefSeq" id="NP_001008894.1">
    <molecule id="Q8N8Q9-2"/>
    <property type="nucleotide sequence ID" value="NM_001008894.3"/>
</dbReference>
<dbReference type="RefSeq" id="NP_001171817.1">
    <molecule id="Q8N8Q9-2"/>
    <property type="nucleotide sequence ID" value="NM_001184888.2"/>
</dbReference>
<dbReference type="RefSeq" id="NP_001171818.1">
    <molecule id="Q8N8Q9-1"/>
    <property type="nucleotide sequence ID" value="NM_001184889.2"/>
</dbReference>
<dbReference type="RefSeq" id="NP_112184.4">
    <molecule id="Q8N8Q9-1"/>
    <property type="nucleotide sequence ID" value="NM_030922.6"/>
</dbReference>
<dbReference type="RefSeq" id="XP_005272603.1">
    <molecule id="Q8N8Q9-1"/>
    <property type="nucleotide sequence ID" value="XM_005272546.4"/>
</dbReference>
<dbReference type="RefSeq" id="XP_005272604.1">
    <molecule id="Q8N8Q9-1"/>
    <property type="nucleotide sequence ID" value="XM_005272547.5"/>
</dbReference>
<dbReference type="RefSeq" id="XP_005272605.1">
    <molecule id="Q8N8Q9-1"/>
    <property type="nucleotide sequence ID" value="XM_005272548.4"/>
</dbReference>
<dbReference type="RefSeq" id="XP_005272607.1">
    <molecule id="Q8N8Q9-1"/>
    <property type="nucleotide sequence ID" value="XM_005272550.4"/>
</dbReference>
<dbReference type="RefSeq" id="XP_005272609.1">
    <molecule id="Q8N8Q9-1"/>
    <property type="nucleotide sequence ID" value="XM_005272552.5"/>
</dbReference>
<dbReference type="RefSeq" id="XP_005272610.1">
    <molecule id="Q8N8Q9-1"/>
    <property type="nucleotide sequence ID" value="XM_005272553.6"/>
</dbReference>
<dbReference type="RefSeq" id="XP_006720427.1">
    <molecule id="Q8N8Q9-1"/>
    <property type="nucleotide sequence ID" value="XM_006720364.3"/>
</dbReference>
<dbReference type="RefSeq" id="XP_006720428.1">
    <property type="nucleotide sequence ID" value="XM_006720365.2"/>
</dbReference>
<dbReference type="RefSeq" id="XP_006720429.1">
    <property type="nucleotide sequence ID" value="XM_006720366.3"/>
</dbReference>
<dbReference type="RefSeq" id="XP_006720430.1">
    <molecule id="Q8N8Q9-2"/>
    <property type="nucleotide sequence ID" value="XM_006720367.2"/>
</dbReference>
<dbReference type="RefSeq" id="XP_011542179.1">
    <molecule id="Q8N8Q9-1"/>
    <property type="nucleotide sequence ID" value="XM_011543877.3"/>
</dbReference>
<dbReference type="RefSeq" id="XP_011542180.1">
    <molecule id="Q8N8Q9-1"/>
    <property type="nucleotide sequence ID" value="XM_011543878.4"/>
</dbReference>
<dbReference type="RefSeq" id="XP_011542181.1">
    <molecule id="Q8N8Q9-1"/>
    <property type="nucleotide sequence ID" value="XM_011543879.4"/>
</dbReference>
<dbReference type="RefSeq" id="XP_011542182.1">
    <molecule id="Q8N8Q9-1"/>
    <property type="nucleotide sequence ID" value="XM_011543880.4"/>
</dbReference>
<dbReference type="RefSeq" id="XP_016878134.1">
    <molecule id="Q8N8Q9-1"/>
    <property type="nucleotide sequence ID" value="XM_017022645.2"/>
</dbReference>
<dbReference type="RefSeq" id="XP_016878135.1">
    <molecule id="Q8N8Q9-1"/>
    <property type="nucleotide sequence ID" value="XM_017022646.2"/>
</dbReference>
<dbReference type="RefSeq" id="XP_016878136.1">
    <molecule id="Q8N8Q9-1"/>
    <property type="nucleotide sequence ID" value="XM_017022647.2"/>
</dbReference>
<dbReference type="RefSeq" id="XP_016878137.1">
    <molecule id="Q8N8Q9-1"/>
    <property type="nucleotide sequence ID" value="XM_017022648.2"/>
</dbReference>
<dbReference type="RefSeq" id="XP_016878138.1">
    <molecule id="Q8N8Q9-1"/>
    <property type="nucleotide sequence ID" value="XM_017022649.3"/>
</dbReference>
<dbReference type="RefSeq" id="XP_016878139.1">
    <molecule id="Q8N8Q9-1"/>
    <property type="nucleotide sequence ID" value="XM_017022650.3"/>
</dbReference>
<dbReference type="RefSeq" id="XP_016878140.1">
    <molecule id="Q8N8Q9-1"/>
    <property type="nucleotide sequence ID" value="XM_017022651.3"/>
</dbReference>
<dbReference type="RefSeq" id="XP_016878141.1">
    <molecule id="Q8N8Q9-1"/>
    <property type="nucleotide sequence ID" value="XM_017022652.3"/>
</dbReference>
<dbReference type="RefSeq" id="XP_016878142.1">
    <molecule id="Q8N8Q9-1"/>
    <property type="nucleotide sequence ID" value="XM_017022653.3"/>
</dbReference>
<dbReference type="RefSeq" id="XP_016878143.1">
    <molecule id="Q8N8Q9-1"/>
    <property type="nucleotide sequence ID" value="XM_017022654.3"/>
</dbReference>
<dbReference type="RefSeq" id="XP_016878144.1">
    <molecule id="Q8N8Q9-2"/>
    <property type="nucleotide sequence ID" value="XM_017022655.2"/>
</dbReference>
<dbReference type="RefSeq" id="XP_016878145.1">
    <molecule id="Q8N8Q9-2"/>
    <property type="nucleotide sequence ID" value="XM_017022656.2"/>
</dbReference>
<dbReference type="RefSeq" id="XP_016878146.1">
    <molecule id="Q8N8Q9-2"/>
    <property type="nucleotide sequence ID" value="XM_017022657.2"/>
</dbReference>
<dbReference type="RefSeq" id="XP_016878147.1">
    <molecule id="Q8N8Q9-2"/>
    <property type="nucleotide sequence ID" value="XM_017022658.2"/>
</dbReference>
<dbReference type="RefSeq" id="XP_016878148.1">
    <molecule id="Q8N8Q9-2"/>
    <property type="nucleotide sequence ID" value="XM_017022659.2"/>
</dbReference>
<dbReference type="RefSeq" id="XP_016878149.1">
    <molecule id="Q8N8Q9-2"/>
    <property type="nucleotide sequence ID" value="XM_017022660.2"/>
</dbReference>
<dbReference type="RefSeq" id="XP_016878150.1">
    <molecule id="Q8N8Q9-2"/>
    <property type="nucleotide sequence ID" value="XM_017022661.2"/>
</dbReference>
<dbReference type="RefSeq" id="XP_016878151.1">
    <molecule id="Q8N8Q9-2"/>
    <property type="nucleotide sequence ID" value="XM_017022662.2"/>
</dbReference>
<dbReference type="RefSeq" id="XP_016878152.1">
    <molecule id="Q8N8Q9-2"/>
    <property type="nucleotide sequence ID" value="XM_017022663.2"/>
</dbReference>
<dbReference type="RefSeq" id="XP_047289106.1">
    <molecule id="Q8N8Q9-1"/>
    <property type="nucleotide sequence ID" value="XM_047433150.1"/>
</dbReference>
<dbReference type="RefSeq" id="XP_047289107.1">
    <molecule id="Q8N8Q9-1"/>
    <property type="nucleotide sequence ID" value="XM_047433151.1"/>
</dbReference>
<dbReference type="RefSeq" id="XP_047289108.1">
    <molecule id="Q8N8Q9-1"/>
    <property type="nucleotide sequence ID" value="XM_047433152.1"/>
</dbReference>
<dbReference type="RefSeq" id="XP_047289109.1">
    <molecule id="Q8N8Q9-1"/>
    <property type="nucleotide sequence ID" value="XM_047433153.1"/>
</dbReference>
<dbReference type="RefSeq" id="XP_047289110.1">
    <molecule id="Q8N8Q9-1"/>
    <property type="nucleotide sequence ID" value="XM_047433154.1"/>
</dbReference>
<dbReference type="RefSeq" id="XP_047289111.1">
    <molecule id="Q8N8Q9-1"/>
    <property type="nucleotide sequence ID" value="XM_047433155.1"/>
</dbReference>
<dbReference type="RefSeq" id="XP_047289112.1">
    <molecule id="Q8N8Q9-1"/>
    <property type="nucleotide sequence ID" value="XM_047433156.1"/>
</dbReference>
<dbReference type="RefSeq" id="XP_047289113.1">
    <molecule id="Q8N8Q9-1"/>
    <property type="nucleotide sequence ID" value="XM_047433157.1"/>
</dbReference>
<dbReference type="RefSeq" id="XP_047289114.1">
    <molecule id="Q8N8Q9-2"/>
    <property type="nucleotide sequence ID" value="XM_047433158.1"/>
</dbReference>
<dbReference type="RefSeq" id="XP_047289115.1">
    <molecule id="Q8N8Q9-2"/>
    <property type="nucleotide sequence ID" value="XM_047433159.1"/>
</dbReference>
<dbReference type="RefSeq" id="XP_047289116.1">
    <molecule id="Q8N8Q9-2"/>
    <property type="nucleotide sequence ID" value="XM_047433160.1"/>
</dbReference>
<dbReference type="RefSeq" id="XP_047289117.1">
    <molecule id="Q8N8Q9-2"/>
    <property type="nucleotide sequence ID" value="XM_047433161.1"/>
</dbReference>
<dbReference type="RefSeq" id="XP_047289118.1">
    <molecule id="Q8N8Q9-2"/>
    <property type="nucleotide sequence ID" value="XM_047433162.1"/>
</dbReference>
<dbReference type="RefSeq" id="XP_047289119.1">
    <molecule id="Q8N8Q9-2"/>
    <property type="nucleotide sequence ID" value="XM_047433163.1"/>
</dbReference>
<dbReference type="RefSeq" id="XP_054188558.1">
    <molecule id="Q8N8Q9-1"/>
    <property type="nucleotide sequence ID" value="XM_054332583.1"/>
</dbReference>
<dbReference type="RefSeq" id="XP_054188559.1">
    <molecule id="Q8N8Q9-1"/>
    <property type="nucleotide sequence ID" value="XM_054332584.1"/>
</dbReference>
<dbReference type="RefSeq" id="XP_054188560.1">
    <molecule id="Q8N8Q9-1"/>
    <property type="nucleotide sequence ID" value="XM_054332585.1"/>
</dbReference>
<dbReference type="RefSeq" id="XP_054188561.1">
    <molecule id="Q8N8Q9-1"/>
    <property type="nucleotide sequence ID" value="XM_054332586.1"/>
</dbReference>
<dbReference type="RefSeq" id="XP_054188562.1">
    <molecule id="Q8N8Q9-1"/>
    <property type="nucleotide sequence ID" value="XM_054332587.1"/>
</dbReference>
<dbReference type="RefSeq" id="XP_054188563.1">
    <molecule id="Q8N8Q9-1"/>
    <property type="nucleotide sequence ID" value="XM_054332588.1"/>
</dbReference>
<dbReference type="RefSeq" id="XP_054188564.1">
    <molecule id="Q8N8Q9-1"/>
    <property type="nucleotide sequence ID" value="XM_054332589.1"/>
</dbReference>
<dbReference type="RefSeq" id="XP_054188565.1">
    <molecule id="Q8N8Q9-1"/>
    <property type="nucleotide sequence ID" value="XM_054332590.1"/>
</dbReference>
<dbReference type="RefSeq" id="XP_054188566.1">
    <molecule id="Q8N8Q9-1"/>
    <property type="nucleotide sequence ID" value="XM_054332591.1"/>
</dbReference>
<dbReference type="RefSeq" id="XP_054188567.1">
    <molecule id="Q8N8Q9-1"/>
    <property type="nucleotide sequence ID" value="XM_054332592.1"/>
</dbReference>
<dbReference type="RefSeq" id="XP_054188568.1">
    <molecule id="Q8N8Q9-1"/>
    <property type="nucleotide sequence ID" value="XM_054332593.1"/>
</dbReference>
<dbReference type="RefSeq" id="XP_054188569.1">
    <molecule id="Q8N8Q9-1"/>
    <property type="nucleotide sequence ID" value="XM_054332594.1"/>
</dbReference>
<dbReference type="RefSeq" id="XP_054188570.1">
    <molecule id="Q8N8Q9-1"/>
    <property type="nucleotide sequence ID" value="XM_054332595.1"/>
</dbReference>
<dbReference type="RefSeq" id="XP_054188571.1">
    <molecule id="Q8N8Q9-1"/>
    <property type="nucleotide sequence ID" value="XM_054332596.1"/>
</dbReference>
<dbReference type="RefSeq" id="XP_054188572.1">
    <molecule id="Q8N8Q9-1"/>
    <property type="nucleotide sequence ID" value="XM_054332597.1"/>
</dbReference>
<dbReference type="RefSeq" id="XP_054188573.1">
    <molecule id="Q8N8Q9-1"/>
    <property type="nucleotide sequence ID" value="XM_054332598.1"/>
</dbReference>
<dbReference type="RefSeq" id="XP_054188574.1">
    <molecule id="Q8N8Q9-1"/>
    <property type="nucleotide sequence ID" value="XM_054332599.1"/>
</dbReference>
<dbReference type="RefSeq" id="XP_054188575.1">
    <molecule id="Q8N8Q9-1"/>
    <property type="nucleotide sequence ID" value="XM_054332600.1"/>
</dbReference>
<dbReference type="RefSeq" id="XP_054188576.1">
    <molecule id="Q8N8Q9-1"/>
    <property type="nucleotide sequence ID" value="XM_054332601.1"/>
</dbReference>
<dbReference type="RefSeq" id="XP_054188577.1">
    <molecule id="Q8N8Q9-1"/>
    <property type="nucleotide sequence ID" value="XM_054332602.1"/>
</dbReference>
<dbReference type="RefSeq" id="XP_054188578.1">
    <molecule id="Q8N8Q9-1"/>
    <property type="nucleotide sequence ID" value="XM_054332603.1"/>
</dbReference>
<dbReference type="RefSeq" id="XP_054188579.1">
    <molecule id="Q8N8Q9-1"/>
    <property type="nucleotide sequence ID" value="XM_054332604.1"/>
</dbReference>
<dbReference type="RefSeq" id="XP_054188580.1">
    <molecule id="Q8N8Q9-1"/>
    <property type="nucleotide sequence ID" value="XM_054332605.1"/>
</dbReference>
<dbReference type="RefSeq" id="XP_054188581.1">
    <molecule id="Q8N8Q9-1"/>
    <property type="nucleotide sequence ID" value="XM_054332606.1"/>
</dbReference>
<dbReference type="RefSeq" id="XP_054188582.1">
    <molecule id="Q8N8Q9-1"/>
    <property type="nucleotide sequence ID" value="XM_054332607.1"/>
</dbReference>
<dbReference type="RefSeq" id="XP_054188583.1">
    <molecule id="Q8N8Q9-1"/>
    <property type="nucleotide sequence ID" value="XM_054332608.1"/>
</dbReference>
<dbReference type="RefSeq" id="XP_054188584.1">
    <molecule id="Q8N8Q9-1"/>
    <property type="nucleotide sequence ID" value="XM_054332609.1"/>
</dbReference>
<dbReference type="RefSeq" id="XP_054188585.1">
    <molecule id="Q8N8Q9-1"/>
    <property type="nucleotide sequence ID" value="XM_054332610.1"/>
</dbReference>
<dbReference type="RefSeq" id="XP_054188586.1">
    <molecule id="Q8N8Q9-1"/>
    <property type="nucleotide sequence ID" value="XM_054332611.1"/>
</dbReference>
<dbReference type="RefSeq" id="XP_054188587.1">
    <molecule id="Q8N8Q9-2"/>
    <property type="nucleotide sequence ID" value="XM_054332612.1"/>
</dbReference>
<dbReference type="RefSeq" id="XP_054188588.1">
    <molecule id="Q8N8Q9-2"/>
    <property type="nucleotide sequence ID" value="XM_054332613.1"/>
</dbReference>
<dbReference type="RefSeq" id="XP_054188589.1">
    <molecule id="Q8N8Q9-2"/>
    <property type="nucleotide sequence ID" value="XM_054332614.1"/>
</dbReference>
<dbReference type="RefSeq" id="XP_054188590.1">
    <molecule id="Q8N8Q9-2"/>
    <property type="nucleotide sequence ID" value="XM_054332615.1"/>
</dbReference>
<dbReference type="RefSeq" id="XP_054188591.1">
    <molecule id="Q8N8Q9-2"/>
    <property type="nucleotide sequence ID" value="XM_054332616.1"/>
</dbReference>
<dbReference type="RefSeq" id="XP_054188592.1">
    <molecule id="Q8N8Q9-2"/>
    <property type="nucleotide sequence ID" value="XM_054332617.1"/>
</dbReference>
<dbReference type="RefSeq" id="XP_054188593.1">
    <molecule id="Q8N8Q9-2"/>
    <property type="nucleotide sequence ID" value="XM_054332618.1"/>
</dbReference>
<dbReference type="RefSeq" id="XP_054188594.1">
    <molecule id="Q8N8Q9-2"/>
    <property type="nucleotide sequence ID" value="XM_054332619.1"/>
</dbReference>
<dbReference type="RefSeq" id="XP_054188595.1">
    <molecule id="Q8N8Q9-2"/>
    <property type="nucleotide sequence ID" value="XM_054332620.1"/>
</dbReference>
<dbReference type="RefSeq" id="XP_054188596.1">
    <molecule id="Q8N8Q9-2"/>
    <property type="nucleotide sequence ID" value="XM_054332621.1"/>
</dbReference>
<dbReference type="RefSeq" id="XP_054188597.1">
    <molecule id="Q8N8Q9-2"/>
    <property type="nucleotide sequence ID" value="XM_054332622.1"/>
</dbReference>
<dbReference type="RefSeq" id="XP_054188598.1">
    <molecule id="Q8N8Q9-2"/>
    <property type="nucleotide sequence ID" value="XM_054332623.1"/>
</dbReference>
<dbReference type="RefSeq" id="XP_054188599.1">
    <molecule id="Q8N8Q9-2"/>
    <property type="nucleotide sequence ID" value="XM_054332624.1"/>
</dbReference>
<dbReference type="RefSeq" id="XP_054234909.1">
    <molecule id="Q8N8Q9-1"/>
    <property type="nucleotide sequence ID" value="XM_054378934.1"/>
</dbReference>
<dbReference type="RefSeq" id="XP_054234910.1">
    <molecule id="Q8N8Q9-1"/>
    <property type="nucleotide sequence ID" value="XM_054378935.1"/>
</dbReference>
<dbReference type="RefSeq" id="XP_054234911.1">
    <molecule id="Q8N8Q9-1"/>
    <property type="nucleotide sequence ID" value="XM_054378936.1"/>
</dbReference>
<dbReference type="RefSeq" id="XP_054234912.1">
    <molecule id="Q8N8Q9-1"/>
    <property type="nucleotide sequence ID" value="XM_054378937.1"/>
</dbReference>
<dbReference type="RefSeq" id="XP_054234913.1">
    <molecule id="Q8N8Q9-1"/>
    <property type="nucleotide sequence ID" value="XM_054378938.1"/>
</dbReference>
<dbReference type="RefSeq" id="XP_054234914.1">
    <molecule id="Q8N8Q9-1"/>
    <property type="nucleotide sequence ID" value="XM_054378939.1"/>
</dbReference>
<dbReference type="RefSeq" id="XP_054234915.1">
    <molecule id="Q8N8Q9-1"/>
    <property type="nucleotide sequence ID" value="XM_054378940.1"/>
</dbReference>
<dbReference type="RefSeq" id="XP_054234916.1">
    <molecule id="Q8N8Q9-1"/>
    <property type="nucleotide sequence ID" value="XM_054378941.1"/>
</dbReference>
<dbReference type="RefSeq" id="XP_054234917.1">
    <molecule id="Q8N8Q9-1"/>
    <property type="nucleotide sequence ID" value="XM_054378942.1"/>
</dbReference>
<dbReference type="RefSeq" id="XP_054234918.1">
    <molecule id="Q8N8Q9-1"/>
    <property type="nucleotide sequence ID" value="XM_054378943.1"/>
</dbReference>
<dbReference type="RefSeq" id="XP_054234919.1">
    <molecule id="Q8N8Q9-1"/>
    <property type="nucleotide sequence ID" value="XM_054378944.1"/>
</dbReference>
<dbReference type="RefSeq" id="XP_054234920.1">
    <molecule id="Q8N8Q9-1"/>
    <property type="nucleotide sequence ID" value="XM_054378945.1"/>
</dbReference>
<dbReference type="RefSeq" id="XP_054234921.1">
    <molecule id="Q8N8Q9-1"/>
    <property type="nucleotide sequence ID" value="XM_054378946.1"/>
</dbReference>
<dbReference type="RefSeq" id="XP_054234922.1">
    <molecule id="Q8N8Q9-1"/>
    <property type="nucleotide sequence ID" value="XM_054378947.1"/>
</dbReference>
<dbReference type="RefSeq" id="XP_054234923.1">
    <molecule id="Q8N8Q9-1"/>
    <property type="nucleotide sequence ID" value="XM_054378948.1"/>
</dbReference>
<dbReference type="RefSeq" id="XP_054234924.1">
    <molecule id="Q8N8Q9-1"/>
    <property type="nucleotide sequence ID" value="XM_054378949.1"/>
</dbReference>
<dbReference type="RefSeq" id="XP_054234925.1">
    <molecule id="Q8N8Q9-1"/>
    <property type="nucleotide sequence ID" value="XM_054378950.1"/>
</dbReference>
<dbReference type="RefSeq" id="XP_054234926.1">
    <molecule id="Q8N8Q9-1"/>
    <property type="nucleotide sequence ID" value="XM_054378951.1"/>
</dbReference>
<dbReference type="RefSeq" id="XP_054234927.1">
    <molecule id="Q8N8Q9-1"/>
    <property type="nucleotide sequence ID" value="XM_054378952.1"/>
</dbReference>
<dbReference type="RefSeq" id="XP_054234928.1">
    <molecule id="Q8N8Q9-1"/>
    <property type="nucleotide sequence ID" value="XM_054378953.1"/>
</dbReference>
<dbReference type="RefSeq" id="XP_054234929.1">
    <molecule id="Q8N8Q9-1"/>
    <property type="nucleotide sequence ID" value="XM_054378954.1"/>
</dbReference>
<dbReference type="RefSeq" id="XP_054234930.1">
    <molecule id="Q8N8Q9-1"/>
    <property type="nucleotide sequence ID" value="XM_054378955.1"/>
</dbReference>
<dbReference type="RefSeq" id="XP_054234931.1">
    <molecule id="Q8N8Q9-1"/>
    <property type="nucleotide sequence ID" value="XM_054378956.1"/>
</dbReference>
<dbReference type="RefSeq" id="XP_054234932.1">
    <molecule id="Q8N8Q9-1"/>
    <property type="nucleotide sequence ID" value="XM_054378957.1"/>
</dbReference>
<dbReference type="RefSeq" id="XP_054234933.1">
    <molecule id="Q8N8Q9-1"/>
    <property type="nucleotide sequence ID" value="XM_054378958.1"/>
</dbReference>
<dbReference type="RefSeq" id="XP_054234934.1">
    <molecule id="Q8N8Q9-1"/>
    <property type="nucleotide sequence ID" value="XM_054378959.1"/>
</dbReference>
<dbReference type="RefSeq" id="XP_054234935.1">
    <molecule id="Q8N8Q9-1"/>
    <property type="nucleotide sequence ID" value="XM_054378960.1"/>
</dbReference>
<dbReference type="RefSeq" id="XP_054234936.1">
    <molecule id="Q8N8Q9-1"/>
    <property type="nucleotide sequence ID" value="XM_054378961.1"/>
</dbReference>
<dbReference type="RefSeq" id="XP_054234937.1">
    <molecule id="Q8N8Q9-1"/>
    <property type="nucleotide sequence ID" value="XM_054378962.1"/>
</dbReference>
<dbReference type="RefSeq" id="XP_054234938.1">
    <molecule id="Q8N8Q9-2"/>
    <property type="nucleotide sequence ID" value="XM_054378963.1"/>
</dbReference>
<dbReference type="RefSeq" id="XP_054234939.1">
    <molecule id="Q8N8Q9-2"/>
    <property type="nucleotide sequence ID" value="XM_054378964.1"/>
</dbReference>
<dbReference type="RefSeq" id="XP_054234940.1">
    <molecule id="Q8N8Q9-2"/>
    <property type="nucleotide sequence ID" value="XM_054378965.1"/>
</dbReference>
<dbReference type="RefSeq" id="XP_054234941.1">
    <molecule id="Q8N8Q9-2"/>
    <property type="nucleotide sequence ID" value="XM_054378966.1"/>
</dbReference>
<dbReference type="RefSeq" id="XP_054234942.1">
    <molecule id="Q8N8Q9-2"/>
    <property type="nucleotide sequence ID" value="XM_054378967.1"/>
</dbReference>
<dbReference type="RefSeq" id="XP_054234943.1">
    <molecule id="Q8N8Q9-2"/>
    <property type="nucleotide sequence ID" value="XM_054378968.1"/>
</dbReference>
<dbReference type="RefSeq" id="XP_054234944.1">
    <molecule id="Q8N8Q9-2"/>
    <property type="nucleotide sequence ID" value="XM_054378969.1"/>
</dbReference>
<dbReference type="RefSeq" id="XP_054234945.1">
    <molecule id="Q8N8Q9-2"/>
    <property type="nucleotide sequence ID" value="XM_054378970.1"/>
</dbReference>
<dbReference type="RefSeq" id="XP_054234946.1">
    <molecule id="Q8N8Q9-2"/>
    <property type="nucleotide sequence ID" value="XM_054378971.1"/>
</dbReference>
<dbReference type="RefSeq" id="XP_054234947.1">
    <molecule id="Q8N8Q9-2"/>
    <property type="nucleotide sequence ID" value="XM_054378972.1"/>
</dbReference>
<dbReference type="RefSeq" id="XP_054234948.1">
    <molecule id="Q8N8Q9-2"/>
    <property type="nucleotide sequence ID" value="XM_054378973.1"/>
</dbReference>
<dbReference type="RefSeq" id="XP_054234949.1">
    <molecule id="Q8N8Q9-2"/>
    <property type="nucleotide sequence ID" value="XM_054378974.1"/>
</dbReference>
<dbReference type="RefSeq" id="XP_054234950.1">
    <molecule id="Q8N8Q9-2"/>
    <property type="nucleotide sequence ID" value="XM_054378975.1"/>
</dbReference>
<dbReference type="RefSeq" id="XP_054234951.1">
    <molecule id="Q8N8Q9-2"/>
    <property type="nucleotide sequence ID" value="XM_054378976.1"/>
</dbReference>
<dbReference type="RefSeq" id="XP_054234952.1">
    <molecule id="Q8N8Q9-2"/>
    <property type="nucleotide sequence ID" value="XM_054378977.1"/>
</dbReference>
<dbReference type="RefSeq" id="XP_054234953.1">
    <molecule id="Q8N8Q9-2"/>
    <property type="nucleotide sequence ID" value="XM_054378978.1"/>
</dbReference>
<dbReference type="BioGRID" id="123549">
    <property type="interactions" value="20"/>
</dbReference>
<dbReference type="FunCoup" id="Q8N8Q9">
    <property type="interactions" value="1068"/>
</dbReference>
<dbReference type="IntAct" id="Q8N8Q9">
    <property type="interactions" value="14"/>
</dbReference>
<dbReference type="MINT" id="Q8N8Q9"/>
<dbReference type="STRING" id="9606.ENSP00000337618"/>
<dbReference type="TCDB" id="2.A.7.25.2">
    <property type="family name" value="the drug/metabolite transporter (dmt) superfamily"/>
</dbReference>
<dbReference type="iPTMnet" id="Q8N8Q9"/>
<dbReference type="PhosphoSitePlus" id="Q8N8Q9"/>
<dbReference type="BioMuta" id="NIPA2"/>
<dbReference type="DMDM" id="73921217"/>
<dbReference type="jPOST" id="Q8N8Q9"/>
<dbReference type="MassIVE" id="Q8N8Q9"/>
<dbReference type="PaxDb" id="9606-ENSP00000337618"/>
<dbReference type="PeptideAtlas" id="Q8N8Q9"/>
<dbReference type="ProteomicsDB" id="30041"/>
<dbReference type="ProteomicsDB" id="72453">
    <molecule id="Q8N8Q9-1"/>
</dbReference>
<dbReference type="Pumba" id="Q8N8Q9"/>
<dbReference type="Antibodypedia" id="22214">
    <property type="antibodies" value="39 antibodies from 16 providers"/>
</dbReference>
<dbReference type="DNASU" id="81614"/>
<dbReference type="Ensembl" id="ENST00000337451.8">
    <molecule id="Q8N8Q9-1"/>
    <property type="protein sequence ID" value="ENSP00000337618.3"/>
    <property type="gene ID" value="ENSG00000140157.16"/>
</dbReference>
<dbReference type="Ensembl" id="ENST00000359727.8">
    <molecule id="Q8N8Q9-2"/>
    <property type="protein sequence ID" value="ENSP00000352762.4"/>
    <property type="gene ID" value="ENSG00000140157.16"/>
</dbReference>
<dbReference type="Ensembl" id="ENST00000398013.7">
    <molecule id="Q8N8Q9-1"/>
    <property type="protein sequence ID" value="ENSP00000381095.3"/>
    <property type="gene ID" value="ENSG00000140157.16"/>
</dbReference>
<dbReference type="Ensembl" id="ENST00000398014.7">
    <molecule id="Q8N8Q9-2"/>
    <property type="protein sequence ID" value="ENSP00000381096.3"/>
    <property type="gene ID" value="ENSG00000140157.16"/>
</dbReference>
<dbReference type="Ensembl" id="ENST00000539711.2">
    <molecule id="Q8N8Q9-2"/>
    <property type="protein sequence ID" value="ENSP00000437746.2"/>
    <property type="gene ID" value="ENSG00000140157.16"/>
</dbReference>
<dbReference type="Ensembl" id="ENST00000674173.1">
    <molecule id="Q8N8Q9-1"/>
    <property type="protein sequence ID" value="ENSP00000501408.1"/>
    <property type="gene ID" value="ENSG00000140157.16"/>
</dbReference>
<dbReference type="Ensembl" id="ENST00000674289.1">
    <molecule id="Q8N8Q9-1"/>
    <property type="protein sequence ID" value="ENSP00000501412.1"/>
    <property type="gene ID" value="ENSG00000140157.16"/>
</dbReference>
<dbReference type="Ensembl" id="ENST00000674330.1">
    <molecule id="Q8N8Q9-1"/>
    <property type="protein sequence ID" value="ENSP00000501373.1"/>
    <property type="gene ID" value="ENSG00000140157.16"/>
</dbReference>
<dbReference type="Ensembl" id="ENST00000674477.1">
    <molecule id="Q8N8Q9-1"/>
    <property type="protein sequence ID" value="ENSP00000501489.1"/>
    <property type="gene ID" value="ENSG00000140157.16"/>
</dbReference>
<dbReference type="GeneID" id="81614"/>
<dbReference type="KEGG" id="hsa:81614"/>
<dbReference type="MANE-Select" id="ENST00000337451.8">
    <property type="protein sequence ID" value="ENSP00000337618.3"/>
    <property type="RefSeq nucleotide sequence ID" value="NM_030922.7"/>
    <property type="RefSeq protein sequence ID" value="NP_112184.4"/>
</dbReference>
<dbReference type="UCSC" id="uc001yux.4">
    <molecule id="Q8N8Q9-1"/>
    <property type="organism name" value="human"/>
</dbReference>
<dbReference type="AGR" id="HGNC:17044"/>
<dbReference type="CTD" id="81614"/>
<dbReference type="DisGeNET" id="81614"/>
<dbReference type="GeneCards" id="NIPA2"/>
<dbReference type="HGNC" id="HGNC:17044">
    <property type="gene designation" value="NIPA2"/>
</dbReference>
<dbReference type="HPA" id="ENSG00000140157">
    <property type="expression patterns" value="Low tissue specificity"/>
</dbReference>
<dbReference type="MalaCards" id="NIPA2"/>
<dbReference type="MIM" id="608146">
    <property type="type" value="gene"/>
</dbReference>
<dbReference type="neXtProt" id="NX_Q8N8Q9"/>
<dbReference type="OpenTargets" id="ENSG00000140157"/>
<dbReference type="Orphanet" id="261183">
    <property type="disease" value="15q11.2 microdeletion syndrome"/>
</dbReference>
<dbReference type="PharmGKB" id="PA134911294"/>
<dbReference type="VEuPathDB" id="HostDB:ENSG00000140157"/>
<dbReference type="eggNOG" id="KOG2922">
    <property type="taxonomic scope" value="Eukaryota"/>
</dbReference>
<dbReference type="GeneTree" id="ENSGT00940000155651"/>
<dbReference type="HOGENOM" id="CLU_012349_1_1_1"/>
<dbReference type="InParanoid" id="Q8N8Q9"/>
<dbReference type="OMA" id="PMVYISI"/>
<dbReference type="OrthoDB" id="6428174at2759"/>
<dbReference type="PAN-GO" id="Q8N8Q9">
    <property type="GO annotations" value="2 GO annotations based on evolutionary models"/>
</dbReference>
<dbReference type="PhylomeDB" id="Q8N8Q9"/>
<dbReference type="TreeFam" id="TF313214"/>
<dbReference type="PathwayCommons" id="Q8N8Q9"/>
<dbReference type="Reactome" id="R-HSA-5223345">
    <property type="pathway name" value="Miscellaneous transport and binding events"/>
</dbReference>
<dbReference type="SignaLink" id="Q8N8Q9"/>
<dbReference type="BioGRID-ORCS" id="81614">
    <property type="hits" value="15 hits in 1150 CRISPR screens"/>
</dbReference>
<dbReference type="ChiTaRS" id="NIPA2">
    <property type="organism name" value="human"/>
</dbReference>
<dbReference type="GeneWiki" id="NIPA2"/>
<dbReference type="GenomeRNAi" id="81614"/>
<dbReference type="Pharos" id="Q8N8Q9">
    <property type="development level" value="Tbio"/>
</dbReference>
<dbReference type="PRO" id="PR:Q8N8Q9"/>
<dbReference type="Proteomes" id="UP000005640">
    <property type="component" value="Chromosome 15"/>
</dbReference>
<dbReference type="RNAct" id="Q8N8Q9">
    <property type="molecule type" value="protein"/>
</dbReference>
<dbReference type="Bgee" id="ENSG00000140157">
    <property type="expression patterns" value="Expressed in pancreatic ductal cell and 204 other cell types or tissues"/>
</dbReference>
<dbReference type="ExpressionAtlas" id="Q8N8Q9">
    <property type="expression patterns" value="baseline and differential"/>
</dbReference>
<dbReference type="GO" id="GO:0005769">
    <property type="term" value="C:early endosome"/>
    <property type="evidence" value="ECO:0007669"/>
    <property type="project" value="UniProtKB-SubCell"/>
</dbReference>
<dbReference type="GO" id="GO:0016020">
    <property type="term" value="C:membrane"/>
    <property type="evidence" value="ECO:0000318"/>
    <property type="project" value="GO_Central"/>
</dbReference>
<dbReference type="GO" id="GO:0005886">
    <property type="term" value="C:plasma membrane"/>
    <property type="evidence" value="ECO:0000315"/>
    <property type="project" value="UniProtKB"/>
</dbReference>
<dbReference type="GO" id="GO:0015095">
    <property type="term" value="F:magnesium ion transmembrane transporter activity"/>
    <property type="evidence" value="ECO:0007669"/>
    <property type="project" value="InterPro"/>
</dbReference>
<dbReference type="GO" id="GO:0015693">
    <property type="term" value="P:magnesium ion transport"/>
    <property type="evidence" value="ECO:0000315"/>
    <property type="project" value="UniProtKB"/>
</dbReference>
<dbReference type="Gene3D" id="1.10.3730.20">
    <property type="match status" value="1"/>
</dbReference>
<dbReference type="InterPro" id="IPR008521">
    <property type="entry name" value="Mg_trans_NIPA"/>
</dbReference>
<dbReference type="PANTHER" id="PTHR12570">
    <property type="match status" value="1"/>
</dbReference>
<dbReference type="PANTHER" id="PTHR12570:SF1">
    <property type="entry name" value="MAGNESIUM TRANSPORTER NIPA2"/>
    <property type="match status" value="1"/>
</dbReference>
<dbReference type="Pfam" id="PF05653">
    <property type="entry name" value="Mg_trans_NIPA"/>
    <property type="match status" value="1"/>
</dbReference>
<dbReference type="SUPFAM" id="SSF103481">
    <property type="entry name" value="Multidrug resistance efflux transporter EmrE"/>
    <property type="match status" value="1"/>
</dbReference>
<proteinExistence type="evidence at protein level"/>
<protein>
    <recommendedName>
        <fullName>Magnesium transporter NIPA2</fullName>
    </recommendedName>
    <alternativeName>
        <fullName>Non-imprinted in Prader-Willi/Angelman syndrome region protein 2</fullName>
    </alternativeName>
</protein>
<gene>
    <name type="primary">NIPA2</name>
</gene>